<dbReference type="EC" id="2.7.7.23" evidence="1"/>
<dbReference type="EC" id="2.3.1.157" evidence="1"/>
<dbReference type="EMBL" id="CP000698">
    <property type="protein sequence ID" value="ABQ24338.1"/>
    <property type="molecule type" value="Genomic_DNA"/>
</dbReference>
<dbReference type="RefSeq" id="WP_011937067.1">
    <property type="nucleotide sequence ID" value="NC_009483.1"/>
</dbReference>
<dbReference type="SMR" id="A5GDL4"/>
<dbReference type="STRING" id="351605.Gura_0122"/>
<dbReference type="KEGG" id="gur:Gura_0122"/>
<dbReference type="HOGENOM" id="CLU_029499_15_2_7"/>
<dbReference type="OrthoDB" id="9775031at2"/>
<dbReference type="UniPathway" id="UPA00113">
    <property type="reaction ID" value="UER00532"/>
</dbReference>
<dbReference type="UniPathway" id="UPA00113">
    <property type="reaction ID" value="UER00533"/>
</dbReference>
<dbReference type="UniPathway" id="UPA00973"/>
<dbReference type="Proteomes" id="UP000006695">
    <property type="component" value="Chromosome"/>
</dbReference>
<dbReference type="GO" id="GO:0005737">
    <property type="term" value="C:cytoplasm"/>
    <property type="evidence" value="ECO:0007669"/>
    <property type="project" value="UniProtKB-SubCell"/>
</dbReference>
<dbReference type="GO" id="GO:0016020">
    <property type="term" value="C:membrane"/>
    <property type="evidence" value="ECO:0007669"/>
    <property type="project" value="GOC"/>
</dbReference>
<dbReference type="GO" id="GO:0019134">
    <property type="term" value="F:glucosamine-1-phosphate N-acetyltransferase activity"/>
    <property type="evidence" value="ECO:0007669"/>
    <property type="project" value="UniProtKB-UniRule"/>
</dbReference>
<dbReference type="GO" id="GO:0000287">
    <property type="term" value="F:magnesium ion binding"/>
    <property type="evidence" value="ECO:0007669"/>
    <property type="project" value="UniProtKB-UniRule"/>
</dbReference>
<dbReference type="GO" id="GO:0003977">
    <property type="term" value="F:UDP-N-acetylglucosamine diphosphorylase activity"/>
    <property type="evidence" value="ECO:0007669"/>
    <property type="project" value="UniProtKB-UniRule"/>
</dbReference>
<dbReference type="GO" id="GO:0000902">
    <property type="term" value="P:cell morphogenesis"/>
    <property type="evidence" value="ECO:0007669"/>
    <property type="project" value="UniProtKB-UniRule"/>
</dbReference>
<dbReference type="GO" id="GO:0071555">
    <property type="term" value="P:cell wall organization"/>
    <property type="evidence" value="ECO:0007669"/>
    <property type="project" value="UniProtKB-KW"/>
</dbReference>
<dbReference type="GO" id="GO:0009245">
    <property type="term" value="P:lipid A biosynthetic process"/>
    <property type="evidence" value="ECO:0007669"/>
    <property type="project" value="UniProtKB-UniRule"/>
</dbReference>
<dbReference type="GO" id="GO:0009252">
    <property type="term" value="P:peptidoglycan biosynthetic process"/>
    <property type="evidence" value="ECO:0007669"/>
    <property type="project" value="UniProtKB-UniRule"/>
</dbReference>
<dbReference type="GO" id="GO:0008360">
    <property type="term" value="P:regulation of cell shape"/>
    <property type="evidence" value="ECO:0007669"/>
    <property type="project" value="UniProtKB-KW"/>
</dbReference>
<dbReference type="GO" id="GO:0006048">
    <property type="term" value="P:UDP-N-acetylglucosamine biosynthetic process"/>
    <property type="evidence" value="ECO:0007669"/>
    <property type="project" value="UniProtKB-UniPathway"/>
</dbReference>
<dbReference type="CDD" id="cd02540">
    <property type="entry name" value="GT2_GlmU_N_bac"/>
    <property type="match status" value="1"/>
</dbReference>
<dbReference type="CDD" id="cd03353">
    <property type="entry name" value="LbH_GlmU_C"/>
    <property type="match status" value="1"/>
</dbReference>
<dbReference type="Gene3D" id="2.160.10.10">
    <property type="entry name" value="Hexapeptide repeat proteins"/>
    <property type="match status" value="1"/>
</dbReference>
<dbReference type="Gene3D" id="3.90.550.10">
    <property type="entry name" value="Spore Coat Polysaccharide Biosynthesis Protein SpsA, Chain A"/>
    <property type="match status" value="1"/>
</dbReference>
<dbReference type="HAMAP" id="MF_01631">
    <property type="entry name" value="GlmU"/>
    <property type="match status" value="1"/>
</dbReference>
<dbReference type="InterPro" id="IPR005882">
    <property type="entry name" value="Bifunctional_GlmU"/>
</dbReference>
<dbReference type="InterPro" id="IPR050065">
    <property type="entry name" value="GlmU-like"/>
</dbReference>
<dbReference type="InterPro" id="IPR038009">
    <property type="entry name" value="GlmU_C_LbH"/>
</dbReference>
<dbReference type="InterPro" id="IPR001451">
    <property type="entry name" value="Hexapep"/>
</dbReference>
<dbReference type="InterPro" id="IPR005835">
    <property type="entry name" value="NTP_transferase_dom"/>
</dbReference>
<dbReference type="InterPro" id="IPR029044">
    <property type="entry name" value="Nucleotide-diphossugar_trans"/>
</dbReference>
<dbReference type="InterPro" id="IPR011004">
    <property type="entry name" value="Trimer_LpxA-like_sf"/>
</dbReference>
<dbReference type="NCBIfam" id="TIGR01173">
    <property type="entry name" value="glmU"/>
    <property type="match status" value="1"/>
</dbReference>
<dbReference type="NCBIfam" id="NF010934">
    <property type="entry name" value="PRK14354.1"/>
    <property type="match status" value="1"/>
</dbReference>
<dbReference type="NCBIfam" id="NF010935">
    <property type="entry name" value="PRK14355.1"/>
    <property type="match status" value="1"/>
</dbReference>
<dbReference type="PANTHER" id="PTHR43584:SF3">
    <property type="entry name" value="BIFUNCTIONAL PROTEIN GLMU"/>
    <property type="match status" value="1"/>
</dbReference>
<dbReference type="PANTHER" id="PTHR43584">
    <property type="entry name" value="NUCLEOTIDYL TRANSFERASE"/>
    <property type="match status" value="1"/>
</dbReference>
<dbReference type="Pfam" id="PF00132">
    <property type="entry name" value="Hexapep"/>
    <property type="match status" value="2"/>
</dbReference>
<dbReference type="Pfam" id="PF00483">
    <property type="entry name" value="NTP_transferase"/>
    <property type="match status" value="1"/>
</dbReference>
<dbReference type="SUPFAM" id="SSF53448">
    <property type="entry name" value="Nucleotide-diphospho-sugar transferases"/>
    <property type="match status" value="1"/>
</dbReference>
<dbReference type="SUPFAM" id="SSF51161">
    <property type="entry name" value="Trimeric LpxA-like enzymes"/>
    <property type="match status" value="1"/>
</dbReference>
<comment type="function">
    <text evidence="1">Catalyzes the last two sequential reactions in the de novo biosynthetic pathway for UDP-N-acetylglucosamine (UDP-GlcNAc). The C-terminal domain catalyzes the transfer of acetyl group from acetyl coenzyme A to glucosamine-1-phosphate (GlcN-1-P) to produce N-acetylglucosamine-1-phosphate (GlcNAc-1-P), which is converted into UDP-GlcNAc by the transfer of uridine 5-monophosphate (from uridine 5-triphosphate), a reaction catalyzed by the N-terminal domain.</text>
</comment>
<comment type="catalytic activity">
    <reaction evidence="1">
        <text>alpha-D-glucosamine 1-phosphate + acetyl-CoA = N-acetyl-alpha-D-glucosamine 1-phosphate + CoA + H(+)</text>
        <dbReference type="Rhea" id="RHEA:13725"/>
        <dbReference type="ChEBI" id="CHEBI:15378"/>
        <dbReference type="ChEBI" id="CHEBI:57287"/>
        <dbReference type="ChEBI" id="CHEBI:57288"/>
        <dbReference type="ChEBI" id="CHEBI:57776"/>
        <dbReference type="ChEBI" id="CHEBI:58516"/>
        <dbReference type="EC" id="2.3.1.157"/>
    </reaction>
</comment>
<comment type="catalytic activity">
    <reaction evidence="1">
        <text>N-acetyl-alpha-D-glucosamine 1-phosphate + UTP + H(+) = UDP-N-acetyl-alpha-D-glucosamine + diphosphate</text>
        <dbReference type="Rhea" id="RHEA:13509"/>
        <dbReference type="ChEBI" id="CHEBI:15378"/>
        <dbReference type="ChEBI" id="CHEBI:33019"/>
        <dbReference type="ChEBI" id="CHEBI:46398"/>
        <dbReference type="ChEBI" id="CHEBI:57705"/>
        <dbReference type="ChEBI" id="CHEBI:57776"/>
        <dbReference type="EC" id="2.7.7.23"/>
    </reaction>
</comment>
<comment type="cofactor">
    <cofactor evidence="1">
        <name>Mg(2+)</name>
        <dbReference type="ChEBI" id="CHEBI:18420"/>
    </cofactor>
    <text evidence="1">Binds 1 Mg(2+) ion per subunit.</text>
</comment>
<comment type="pathway">
    <text evidence="1">Nucleotide-sugar biosynthesis; UDP-N-acetyl-alpha-D-glucosamine biosynthesis; N-acetyl-alpha-D-glucosamine 1-phosphate from alpha-D-glucosamine 6-phosphate (route II): step 2/2.</text>
</comment>
<comment type="pathway">
    <text evidence="1">Nucleotide-sugar biosynthesis; UDP-N-acetyl-alpha-D-glucosamine biosynthesis; UDP-N-acetyl-alpha-D-glucosamine from N-acetyl-alpha-D-glucosamine 1-phosphate: step 1/1.</text>
</comment>
<comment type="pathway">
    <text evidence="1">Bacterial outer membrane biogenesis; LPS lipid A biosynthesis.</text>
</comment>
<comment type="subunit">
    <text evidence="1">Homotrimer.</text>
</comment>
<comment type="subcellular location">
    <subcellularLocation>
        <location evidence="1">Cytoplasm</location>
    </subcellularLocation>
</comment>
<comment type="similarity">
    <text evidence="1">In the N-terminal section; belongs to the N-acetylglucosamine-1-phosphate uridyltransferase family.</text>
</comment>
<comment type="similarity">
    <text evidence="1">In the C-terminal section; belongs to the transferase hexapeptide repeat family.</text>
</comment>
<reference key="1">
    <citation type="submission" date="2007-05" db="EMBL/GenBank/DDBJ databases">
        <title>Complete sequence of Geobacter uraniireducens Rf4.</title>
        <authorList>
            <consortium name="US DOE Joint Genome Institute"/>
            <person name="Copeland A."/>
            <person name="Lucas S."/>
            <person name="Lapidus A."/>
            <person name="Barry K."/>
            <person name="Detter J.C."/>
            <person name="Glavina del Rio T."/>
            <person name="Hammon N."/>
            <person name="Israni S."/>
            <person name="Dalin E."/>
            <person name="Tice H."/>
            <person name="Pitluck S."/>
            <person name="Chertkov O."/>
            <person name="Brettin T."/>
            <person name="Bruce D."/>
            <person name="Han C."/>
            <person name="Schmutz J."/>
            <person name="Larimer F."/>
            <person name="Land M."/>
            <person name="Hauser L."/>
            <person name="Kyrpides N."/>
            <person name="Mikhailova N."/>
            <person name="Shelobolina E."/>
            <person name="Aklujkar M."/>
            <person name="Lovley D."/>
            <person name="Richardson P."/>
        </authorList>
    </citation>
    <scope>NUCLEOTIDE SEQUENCE [LARGE SCALE GENOMIC DNA]</scope>
    <source>
        <strain>ATCC BAA-1134 / JCM 13001 / Rf4</strain>
    </source>
</reference>
<proteinExistence type="inferred from homology"/>
<name>GLMU_GEOUR</name>
<protein>
    <recommendedName>
        <fullName evidence="1">Bifunctional protein GlmU</fullName>
    </recommendedName>
    <domain>
        <recommendedName>
            <fullName evidence="1">UDP-N-acetylglucosamine pyrophosphorylase</fullName>
            <ecNumber evidence="1">2.7.7.23</ecNumber>
        </recommendedName>
        <alternativeName>
            <fullName evidence="1">N-acetylglucosamine-1-phosphate uridyltransferase</fullName>
        </alternativeName>
    </domain>
    <domain>
        <recommendedName>
            <fullName evidence="1">Glucosamine-1-phosphate N-acetyltransferase</fullName>
            <ecNumber evidence="1">2.3.1.157</ecNumber>
        </recommendedName>
    </domain>
</protein>
<organism>
    <name type="scientific">Geotalea uraniireducens (strain Rf4)</name>
    <name type="common">Geobacter uraniireducens</name>
    <dbReference type="NCBI Taxonomy" id="351605"/>
    <lineage>
        <taxon>Bacteria</taxon>
        <taxon>Pseudomonadati</taxon>
        <taxon>Thermodesulfobacteriota</taxon>
        <taxon>Desulfuromonadia</taxon>
        <taxon>Geobacterales</taxon>
        <taxon>Geobacteraceae</taxon>
        <taxon>Geotalea</taxon>
    </lineage>
</organism>
<evidence type="ECO:0000255" key="1">
    <source>
        <dbReference type="HAMAP-Rule" id="MF_01631"/>
    </source>
</evidence>
<keyword id="KW-0012">Acyltransferase</keyword>
<keyword id="KW-0133">Cell shape</keyword>
<keyword id="KW-0961">Cell wall biogenesis/degradation</keyword>
<keyword id="KW-0963">Cytoplasm</keyword>
<keyword id="KW-0460">Magnesium</keyword>
<keyword id="KW-0479">Metal-binding</keyword>
<keyword id="KW-0511">Multifunctional enzyme</keyword>
<keyword id="KW-0548">Nucleotidyltransferase</keyword>
<keyword id="KW-0573">Peptidoglycan synthesis</keyword>
<keyword id="KW-1185">Reference proteome</keyword>
<keyword id="KW-0677">Repeat</keyword>
<keyword id="KW-0808">Transferase</keyword>
<gene>
    <name evidence="1" type="primary">glmU</name>
    <name type="ordered locus">Gura_0122</name>
</gene>
<accession>A5GDL4</accession>
<feature type="chain" id="PRO_1000088133" description="Bifunctional protein GlmU">
    <location>
        <begin position="1"/>
        <end position="457"/>
    </location>
</feature>
<feature type="region of interest" description="Pyrophosphorylase" evidence="1">
    <location>
        <begin position="1"/>
        <end position="232"/>
    </location>
</feature>
<feature type="region of interest" description="Linker" evidence="1">
    <location>
        <begin position="233"/>
        <end position="253"/>
    </location>
</feature>
<feature type="region of interest" description="N-acetyltransferase" evidence="1">
    <location>
        <begin position="254"/>
        <end position="457"/>
    </location>
</feature>
<feature type="active site" description="Proton acceptor" evidence="1">
    <location>
        <position position="366"/>
    </location>
</feature>
<feature type="binding site" evidence="1">
    <location>
        <begin position="9"/>
        <end position="12"/>
    </location>
    <ligand>
        <name>UDP-N-acetyl-alpha-D-glucosamine</name>
        <dbReference type="ChEBI" id="CHEBI:57705"/>
    </ligand>
</feature>
<feature type="binding site" evidence="1">
    <location>
        <position position="23"/>
    </location>
    <ligand>
        <name>UDP-N-acetyl-alpha-D-glucosamine</name>
        <dbReference type="ChEBI" id="CHEBI:57705"/>
    </ligand>
</feature>
<feature type="binding site" evidence="1">
    <location>
        <position position="75"/>
    </location>
    <ligand>
        <name>UDP-N-acetyl-alpha-D-glucosamine</name>
        <dbReference type="ChEBI" id="CHEBI:57705"/>
    </ligand>
</feature>
<feature type="binding site" evidence="1">
    <location>
        <begin position="80"/>
        <end position="81"/>
    </location>
    <ligand>
        <name>UDP-N-acetyl-alpha-D-glucosamine</name>
        <dbReference type="ChEBI" id="CHEBI:57705"/>
    </ligand>
</feature>
<feature type="binding site" evidence="1">
    <location>
        <position position="105"/>
    </location>
    <ligand>
        <name>Mg(2+)</name>
        <dbReference type="ChEBI" id="CHEBI:18420"/>
    </ligand>
</feature>
<feature type="binding site" evidence="1">
    <location>
        <position position="142"/>
    </location>
    <ligand>
        <name>UDP-N-acetyl-alpha-D-glucosamine</name>
        <dbReference type="ChEBI" id="CHEBI:57705"/>
    </ligand>
</feature>
<feature type="binding site" evidence="1">
    <location>
        <position position="157"/>
    </location>
    <ligand>
        <name>UDP-N-acetyl-alpha-D-glucosamine</name>
        <dbReference type="ChEBI" id="CHEBI:57705"/>
    </ligand>
</feature>
<feature type="binding site" evidence="1">
    <location>
        <position position="172"/>
    </location>
    <ligand>
        <name>UDP-N-acetyl-alpha-D-glucosamine</name>
        <dbReference type="ChEBI" id="CHEBI:57705"/>
    </ligand>
</feature>
<feature type="binding site" evidence="1">
    <location>
        <position position="230"/>
    </location>
    <ligand>
        <name>Mg(2+)</name>
        <dbReference type="ChEBI" id="CHEBI:18420"/>
    </ligand>
</feature>
<feature type="binding site" evidence="1">
    <location>
        <position position="230"/>
    </location>
    <ligand>
        <name>UDP-N-acetyl-alpha-D-glucosamine</name>
        <dbReference type="ChEBI" id="CHEBI:57705"/>
    </ligand>
</feature>
<feature type="binding site" evidence="1">
    <location>
        <position position="336"/>
    </location>
    <ligand>
        <name>UDP-N-acetyl-alpha-D-glucosamine</name>
        <dbReference type="ChEBI" id="CHEBI:57705"/>
    </ligand>
</feature>
<feature type="binding site" evidence="1">
    <location>
        <position position="354"/>
    </location>
    <ligand>
        <name>UDP-N-acetyl-alpha-D-glucosamine</name>
        <dbReference type="ChEBI" id="CHEBI:57705"/>
    </ligand>
</feature>
<feature type="binding site" evidence="1">
    <location>
        <position position="369"/>
    </location>
    <ligand>
        <name>UDP-N-acetyl-alpha-D-glucosamine</name>
        <dbReference type="ChEBI" id="CHEBI:57705"/>
    </ligand>
</feature>
<feature type="binding site" evidence="1">
    <location>
        <position position="380"/>
    </location>
    <ligand>
        <name>UDP-N-acetyl-alpha-D-glucosamine</name>
        <dbReference type="ChEBI" id="CHEBI:57705"/>
    </ligand>
</feature>
<feature type="binding site" evidence="1">
    <location>
        <begin position="389"/>
        <end position="390"/>
    </location>
    <ligand>
        <name>acetyl-CoA</name>
        <dbReference type="ChEBI" id="CHEBI:57288"/>
    </ligand>
</feature>
<feature type="binding site" evidence="1">
    <location>
        <position position="408"/>
    </location>
    <ligand>
        <name>acetyl-CoA</name>
        <dbReference type="ChEBI" id="CHEBI:57288"/>
    </ligand>
</feature>
<feature type="binding site" evidence="1">
    <location>
        <position position="426"/>
    </location>
    <ligand>
        <name>acetyl-CoA</name>
        <dbReference type="ChEBI" id="CHEBI:57288"/>
    </ligand>
</feature>
<feature type="binding site" evidence="1">
    <location>
        <position position="443"/>
    </location>
    <ligand>
        <name>acetyl-CoA</name>
        <dbReference type="ChEBI" id="CHEBI:57288"/>
    </ligand>
</feature>
<sequence>MNNLAAVILAAGKGTRMKSNIVKVMHPLGGLPMVSWPVNTAREAGASNIVLVTGHQSEKVQDFFEGQSDVRFAVQEEQLGTGHAVACALPALLGFSGMVLILCGDVPLISTATLKAMVKQHRSRHAVITVLTADFAQPNGYGRIVKDGDGFIKRIVEEKDATDAERRITEINSGIYCVESDFLTVAIPNLKNDNAQREYYLTDIIKEAANLGLLCQAFPVADPAEVMGINDRAQLAEAGQLLRGRINKALMLDGTTLIDPQTTYIDRGVRIGKDTTIHPNVHISGDTEIGNNCLIEPSVVIKGCKIGNGVTIKAGSVMMDAVIHDDVAIGPMAHLRPGTELKEHVKIGNFVETKKIVMGEGSKASHLTYLGDAAIGTNVNIGCGTITCNYDGVKKHRTVIGDDVFVGSDVQFVAPVTIGRNSLIAAGTTVTRDVPPDSLAIARAPQVNKEGWKLKKK</sequence>